<organism>
    <name type="scientific">Shewanella sp. (strain ANA-3)</name>
    <dbReference type="NCBI Taxonomy" id="94122"/>
    <lineage>
        <taxon>Bacteria</taxon>
        <taxon>Pseudomonadati</taxon>
        <taxon>Pseudomonadota</taxon>
        <taxon>Gammaproteobacteria</taxon>
        <taxon>Alteromonadales</taxon>
        <taxon>Shewanellaceae</taxon>
        <taxon>Shewanella</taxon>
    </lineage>
</organism>
<keyword id="KW-0963">Cytoplasm</keyword>
<gene>
    <name type="ordered locus">Shewana3_2426</name>
</gene>
<dbReference type="EMBL" id="CP000469">
    <property type="protein sequence ID" value="ABK48655.1"/>
    <property type="molecule type" value="Genomic_DNA"/>
</dbReference>
<dbReference type="RefSeq" id="WP_011717355.1">
    <property type="nucleotide sequence ID" value="NC_008577.1"/>
</dbReference>
<dbReference type="SMR" id="A0KXY6"/>
<dbReference type="STRING" id="94122.Shewana3_2426"/>
<dbReference type="KEGG" id="shn:Shewana3_2426"/>
<dbReference type="eggNOG" id="COG3081">
    <property type="taxonomic scope" value="Bacteria"/>
</dbReference>
<dbReference type="HOGENOM" id="CLU_063050_0_1_6"/>
<dbReference type="OrthoDB" id="9131762at2"/>
<dbReference type="Proteomes" id="UP000002589">
    <property type="component" value="Chromosome"/>
</dbReference>
<dbReference type="GO" id="GO:0043590">
    <property type="term" value="C:bacterial nucleoid"/>
    <property type="evidence" value="ECO:0007669"/>
    <property type="project" value="TreeGrafter"/>
</dbReference>
<dbReference type="GO" id="GO:0005737">
    <property type="term" value="C:cytoplasm"/>
    <property type="evidence" value="ECO:0007669"/>
    <property type="project" value="UniProtKB-UniRule"/>
</dbReference>
<dbReference type="GO" id="GO:0003690">
    <property type="term" value="F:double-stranded DNA binding"/>
    <property type="evidence" value="ECO:0007669"/>
    <property type="project" value="TreeGrafter"/>
</dbReference>
<dbReference type="GO" id="GO:0003727">
    <property type="term" value="F:single-stranded RNA binding"/>
    <property type="evidence" value="ECO:0007669"/>
    <property type="project" value="TreeGrafter"/>
</dbReference>
<dbReference type="HAMAP" id="MF_00730">
    <property type="entry name" value="NdpA"/>
    <property type="match status" value="1"/>
</dbReference>
<dbReference type="InterPro" id="IPR007358">
    <property type="entry name" value="Nucleoid_associated_NdpA"/>
</dbReference>
<dbReference type="NCBIfam" id="NF001557">
    <property type="entry name" value="PRK00378.1"/>
    <property type="match status" value="1"/>
</dbReference>
<dbReference type="PANTHER" id="PTHR38772">
    <property type="match status" value="1"/>
</dbReference>
<dbReference type="PANTHER" id="PTHR38772:SF1">
    <property type="entry name" value="NUCLEOID-ASSOCIATED PROTEIN YEJK"/>
    <property type="match status" value="1"/>
</dbReference>
<dbReference type="Pfam" id="PF04245">
    <property type="entry name" value="NA37"/>
    <property type="match status" value="1"/>
</dbReference>
<reference key="1">
    <citation type="submission" date="2006-09" db="EMBL/GenBank/DDBJ databases">
        <title>Complete sequence of chromosome 1 of Shewanella sp. ANA-3.</title>
        <authorList>
            <person name="Copeland A."/>
            <person name="Lucas S."/>
            <person name="Lapidus A."/>
            <person name="Barry K."/>
            <person name="Detter J.C."/>
            <person name="Glavina del Rio T."/>
            <person name="Hammon N."/>
            <person name="Israni S."/>
            <person name="Dalin E."/>
            <person name="Tice H."/>
            <person name="Pitluck S."/>
            <person name="Chertkov O."/>
            <person name="Brettin T."/>
            <person name="Bruce D."/>
            <person name="Han C."/>
            <person name="Tapia R."/>
            <person name="Gilna P."/>
            <person name="Schmutz J."/>
            <person name="Larimer F."/>
            <person name="Land M."/>
            <person name="Hauser L."/>
            <person name="Kyrpides N."/>
            <person name="Kim E."/>
            <person name="Newman D."/>
            <person name="Salticov C."/>
            <person name="Konstantinidis K."/>
            <person name="Klappenback J."/>
            <person name="Tiedje J."/>
            <person name="Richardson P."/>
        </authorList>
    </citation>
    <scope>NUCLEOTIDE SEQUENCE [LARGE SCALE GENOMIC DNA]</scope>
    <source>
        <strain>ANA-3</strain>
    </source>
</reference>
<proteinExistence type="inferred from homology"/>
<sequence length="342" mass="38239">MSINIEQAIIHEISQDSQGQLRCRLRPQPLLNSQAVEMMLEELHQTYTSKSGKGFGYFGIHGDDGEANPAFSNALQEYRAGDLGFVEFTGQASKLLQEELAKYDFSQGGFLLMSCYTSMASDFLFVALLSAKSSMTVLDDMELSQNNHLDLSNIQLAARIDLTEWQADKDSRKYISFIRGRAGRKVADFFLDFMGCVEGVNTKAQNKTLMNAVEDFVASSELTKEERQQCRNKVFEYCSERFDEGADIEIKDLADELADQGMESFYDFARGGSYELDEEFPADKSTLRQLKKFSGTGGGVTISFDGGHLGQRVIYDPISDTLLIKGVPANLKDQLDRRLKGE</sequence>
<evidence type="ECO:0000255" key="1">
    <source>
        <dbReference type="HAMAP-Rule" id="MF_00730"/>
    </source>
</evidence>
<name>NDPA_SHESA</name>
<feature type="chain" id="PRO_1000045947" description="Nucleoid-associated protein Shewana3_2426">
    <location>
        <begin position="1"/>
        <end position="342"/>
    </location>
</feature>
<comment type="subcellular location">
    <subcellularLocation>
        <location evidence="1">Cytoplasm</location>
        <location evidence="1">Nucleoid</location>
    </subcellularLocation>
</comment>
<comment type="similarity">
    <text evidence="1">Belongs to the YejK family.</text>
</comment>
<accession>A0KXY6</accession>
<protein>
    <recommendedName>
        <fullName evidence="1">Nucleoid-associated protein Shewana3_2426</fullName>
    </recommendedName>
</protein>